<comment type="function">
    <text evidence="1">DNA-dependent RNA polymerase catalyzes the transcription of DNA into RNA using the four ribonucleoside triphosphates as substrates.</text>
</comment>
<comment type="catalytic activity">
    <reaction evidence="1">
        <text>RNA(n) + a ribonucleoside 5'-triphosphate = RNA(n+1) + diphosphate</text>
        <dbReference type="Rhea" id="RHEA:21248"/>
        <dbReference type="Rhea" id="RHEA-COMP:14527"/>
        <dbReference type="Rhea" id="RHEA-COMP:17342"/>
        <dbReference type="ChEBI" id="CHEBI:33019"/>
        <dbReference type="ChEBI" id="CHEBI:61557"/>
        <dbReference type="ChEBI" id="CHEBI:140395"/>
        <dbReference type="EC" id="2.7.7.6"/>
    </reaction>
</comment>
<comment type="subunit">
    <text evidence="1">In plastids the minimal PEP RNA polymerase catalytic core is composed of four subunits: alpha, beta, beta', and beta''. When a (nuclear-encoded) sigma factor is associated with the core the holoenzyme is formed, which can initiate transcription.</text>
</comment>
<comment type="subcellular location">
    <subcellularLocation>
        <location>Plastid</location>
        <location>Chloroplast</location>
    </subcellularLocation>
</comment>
<comment type="domain">
    <text evidence="1">The N-terminal domain is essential for RNAP assembly and basal transcription, whereas the C-terminal domain is involved in interaction with transcriptional regulators and with upstream promoter elements.</text>
</comment>
<comment type="similarity">
    <text evidence="1">Belongs to the RNA polymerase alpha chain family.</text>
</comment>
<accession>P06270</accession>
<organism>
    <name type="scientific">Marchantia polymorpha</name>
    <name type="common">Common liverwort</name>
    <name type="synonym">Marchantia aquatica</name>
    <dbReference type="NCBI Taxonomy" id="3197"/>
    <lineage>
        <taxon>Eukaryota</taxon>
        <taxon>Viridiplantae</taxon>
        <taxon>Streptophyta</taxon>
        <taxon>Embryophyta</taxon>
        <taxon>Marchantiophyta</taxon>
        <taxon>Marchantiopsida</taxon>
        <taxon>Marchantiidae</taxon>
        <taxon>Marchantiales</taxon>
        <taxon>Marchantiaceae</taxon>
        <taxon>Marchantia</taxon>
    </lineage>
</organism>
<dbReference type="EC" id="2.7.7.6" evidence="1"/>
<dbReference type="EMBL" id="X04465">
    <property type="protein sequence ID" value="CAA28117.1"/>
    <property type="molecule type" value="Genomic_DNA"/>
</dbReference>
<dbReference type="PIR" id="A00687">
    <property type="entry name" value="RNLVA"/>
</dbReference>
<dbReference type="RefSeq" id="NP_039331.1">
    <property type="nucleotide sequence ID" value="NC_001319.1"/>
</dbReference>
<dbReference type="SMR" id="P06270"/>
<dbReference type="GeneID" id="2702564"/>
<dbReference type="GO" id="GO:0009507">
    <property type="term" value="C:chloroplast"/>
    <property type="evidence" value="ECO:0007669"/>
    <property type="project" value="UniProtKB-SubCell"/>
</dbReference>
<dbReference type="GO" id="GO:0000428">
    <property type="term" value="C:DNA-directed RNA polymerase complex"/>
    <property type="evidence" value="ECO:0007669"/>
    <property type="project" value="UniProtKB-KW"/>
</dbReference>
<dbReference type="GO" id="GO:0005739">
    <property type="term" value="C:mitochondrion"/>
    <property type="evidence" value="ECO:0007669"/>
    <property type="project" value="GOC"/>
</dbReference>
<dbReference type="GO" id="GO:0003677">
    <property type="term" value="F:DNA binding"/>
    <property type="evidence" value="ECO:0007669"/>
    <property type="project" value="UniProtKB-UniRule"/>
</dbReference>
<dbReference type="GO" id="GO:0003899">
    <property type="term" value="F:DNA-directed RNA polymerase activity"/>
    <property type="evidence" value="ECO:0007669"/>
    <property type="project" value="UniProtKB-UniRule"/>
</dbReference>
<dbReference type="GO" id="GO:0046983">
    <property type="term" value="F:protein dimerization activity"/>
    <property type="evidence" value="ECO:0007669"/>
    <property type="project" value="InterPro"/>
</dbReference>
<dbReference type="GO" id="GO:0006351">
    <property type="term" value="P:DNA-templated transcription"/>
    <property type="evidence" value="ECO:0007669"/>
    <property type="project" value="UniProtKB-UniRule"/>
</dbReference>
<dbReference type="CDD" id="cd06928">
    <property type="entry name" value="RNAP_alpha_NTD"/>
    <property type="match status" value="1"/>
</dbReference>
<dbReference type="FunFam" id="2.170.120.12:FF:000001">
    <property type="entry name" value="DNA-directed RNA polymerase subunit alpha"/>
    <property type="match status" value="1"/>
</dbReference>
<dbReference type="Gene3D" id="1.10.150.20">
    <property type="entry name" value="5' to 3' exonuclease, C-terminal subdomain"/>
    <property type="match status" value="1"/>
</dbReference>
<dbReference type="Gene3D" id="2.170.120.12">
    <property type="entry name" value="DNA-directed RNA polymerase, insert domain"/>
    <property type="match status" value="1"/>
</dbReference>
<dbReference type="Gene3D" id="3.30.1360.10">
    <property type="entry name" value="RNA polymerase, RBP11-like subunit"/>
    <property type="match status" value="1"/>
</dbReference>
<dbReference type="HAMAP" id="MF_00059">
    <property type="entry name" value="RNApol_bact_RpoA"/>
    <property type="match status" value="1"/>
</dbReference>
<dbReference type="InterPro" id="IPR011262">
    <property type="entry name" value="DNA-dir_RNA_pol_insert"/>
</dbReference>
<dbReference type="InterPro" id="IPR011263">
    <property type="entry name" value="DNA-dir_RNA_pol_RpoA/D/Rpb3"/>
</dbReference>
<dbReference type="InterPro" id="IPR011773">
    <property type="entry name" value="DNA-dir_RpoA"/>
</dbReference>
<dbReference type="InterPro" id="IPR036603">
    <property type="entry name" value="RBP11-like"/>
</dbReference>
<dbReference type="InterPro" id="IPR011260">
    <property type="entry name" value="RNAP_asu_C"/>
</dbReference>
<dbReference type="InterPro" id="IPR036643">
    <property type="entry name" value="RNApol_insert_sf"/>
</dbReference>
<dbReference type="NCBIfam" id="TIGR02027">
    <property type="entry name" value="rpoA"/>
    <property type="match status" value="1"/>
</dbReference>
<dbReference type="Pfam" id="PF01000">
    <property type="entry name" value="RNA_pol_A_bac"/>
    <property type="match status" value="1"/>
</dbReference>
<dbReference type="Pfam" id="PF03118">
    <property type="entry name" value="RNA_pol_A_CTD"/>
    <property type="match status" value="1"/>
</dbReference>
<dbReference type="Pfam" id="PF01193">
    <property type="entry name" value="RNA_pol_L"/>
    <property type="match status" value="1"/>
</dbReference>
<dbReference type="SMART" id="SM00662">
    <property type="entry name" value="RPOLD"/>
    <property type="match status" value="1"/>
</dbReference>
<dbReference type="SUPFAM" id="SSF47789">
    <property type="entry name" value="C-terminal domain of RNA polymerase alpha subunit"/>
    <property type="match status" value="1"/>
</dbReference>
<dbReference type="SUPFAM" id="SSF56553">
    <property type="entry name" value="Insert subdomain of RNA polymerase alpha subunit"/>
    <property type="match status" value="1"/>
</dbReference>
<dbReference type="SUPFAM" id="SSF55257">
    <property type="entry name" value="RBP11-like subunits of RNA polymerase"/>
    <property type="match status" value="1"/>
</dbReference>
<reference key="1">
    <citation type="journal article" date="1988" name="J. Mol. Biol.">
        <title>Structure and organization of Marchantia polymorpha chloroplast genome. III. Gene organization of the large single copy region from rbcL to trnI(CAU).</title>
        <authorList>
            <person name="Fukuzawa H."/>
            <person name="Kohchi T."/>
            <person name="Sano T."/>
            <person name="Shirai H."/>
            <person name="Umesono K."/>
            <person name="Inokuchi H."/>
            <person name="Ozeki H."/>
            <person name="Ohyama K."/>
        </authorList>
    </citation>
    <scope>NUCLEOTIDE SEQUENCE [GENOMIC DNA]</scope>
</reference>
<reference key="2">
    <citation type="journal article" date="1986" name="Nature">
        <title>Chloroplast gene organization deduced from complete sequence of liverwort Marchantia polymorpha chloroplast DNA.</title>
        <authorList>
            <person name="Ohyama K."/>
            <person name="Fukuzawa H."/>
            <person name="Kohchi T."/>
            <person name="Shirai H."/>
            <person name="Sano T."/>
            <person name="Sano S."/>
            <person name="Umesono K."/>
            <person name="Shiki Y."/>
            <person name="Takeuchi M."/>
            <person name="Chang Z."/>
            <person name="Aota S."/>
            <person name="Inokuchi H."/>
            <person name="Ozeki H."/>
        </authorList>
    </citation>
    <scope>NUCLEOTIDE SEQUENCE [LARGE SCALE GENOMIC DNA]</scope>
</reference>
<evidence type="ECO:0000255" key="1">
    <source>
        <dbReference type="HAMAP-Rule" id="MF_00059"/>
    </source>
</evidence>
<geneLocation type="chloroplast"/>
<proteinExistence type="inferred from homology"/>
<gene>
    <name evidence="1" type="primary">rpoA</name>
</gene>
<sequence>MIQDEIKVSTQTLQWKCIESKIESKRLLYSRFAISPFRKGQANTVGIAMRRALLNEIEGASITYAKIKKVKHEYSTIIGLQESIHDILINLKEIVLKSESFEPQKAYISVLGPKKITAQDIKGPSCIKIMIIAQYIATLNKDILLEIELNIEKDRGYRIENLQKYQEGLFPVDAVFMPIRNANYSVHSFESEKKIKEILFLEIWTDGSLTPKEALYEASRNLIDLFIPLINSEKKEKNFGIEKTNESNMSYFPFQSVSLDIEKMTKDVAFKHIFIDQLELPARAYNCLKKVNVHTIADLLHYSEDDLIKIKNFGKKSVEQVLEALKKRFSIQLPKNKNYL</sequence>
<name>RPOA_MARPO</name>
<keyword id="KW-0150">Chloroplast</keyword>
<keyword id="KW-0240">DNA-directed RNA polymerase</keyword>
<keyword id="KW-0548">Nucleotidyltransferase</keyword>
<keyword id="KW-0934">Plastid</keyword>
<keyword id="KW-0804">Transcription</keyword>
<keyword id="KW-0808">Transferase</keyword>
<feature type="chain" id="PRO_0000175469" description="DNA-directed RNA polymerase subunit alpha">
    <location>
        <begin position="1"/>
        <end position="340"/>
    </location>
</feature>
<feature type="region of interest" description="Alpha N-terminal domain (alpha-NTD)" evidence="1">
    <location>
        <begin position="1"/>
        <end position="233"/>
    </location>
</feature>
<feature type="region of interest" description="Alpha C-terminal domain (alpha-CTD)" evidence="1">
    <location>
        <begin position="265"/>
        <end position="340"/>
    </location>
</feature>
<protein>
    <recommendedName>
        <fullName evidence="1">DNA-directed RNA polymerase subunit alpha</fullName>
        <shortName evidence="1">PEP</shortName>
        <ecNumber evidence="1">2.7.7.6</ecNumber>
    </recommendedName>
    <alternativeName>
        <fullName evidence="1">Plastid-encoded RNA polymerase subunit alpha</fullName>
        <shortName evidence="1">RNA polymerase subunit alpha</shortName>
    </alternativeName>
</protein>